<gene>
    <name evidence="1" type="primary">ade</name>
    <name type="ordered locus">Kole_2088</name>
</gene>
<keyword id="KW-0378">Hydrolase</keyword>
<keyword id="KW-0464">Manganese</keyword>
<keyword id="KW-1185">Reference proteome</keyword>
<comment type="catalytic activity">
    <reaction evidence="1">
        <text>adenine + H2O + H(+) = hypoxanthine + NH4(+)</text>
        <dbReference type="Rhea" id="RHEA:23688"/>
        <dbReference type="ChEBI" id="CHEBI:15377"/>
        <dbReference type="ChEBI" id="CHEBI:15378"/>
        <dbReference type="ChEBI" id="CHEBI:16708"/>
        <dbReference type="ChEBI" id="CHEBI:17368"/>
        <dbReference type="ChEBI" id="CHEBI:28938"/>
        <dbReference type="EC" id="3.5.4.2"/>
    </reaction>
</comment>
<comment type="cofactor">
    <cofactor evidence="1">
        <name>Mn(2+)</name>
        <dbReference type="ChEBI" id="CHEBI:29035"/>
    </cofactor>
</comment>
<comment type="similarity">
    <text evidence="1">Belongs to the metallo-dependent hydrolases superfamily. Adenine deaminase family.</text>
</comment>
<feature type="chain" id="PRO_1000215362" description="Adenine deaminase">
    <location>
        <begin position="1"/>
        <end position="577"/>
    </location>
</feature>
<reference key="1">
    <citation type="submission" date="2009-06" db="EMBL/GenBank/DDBJ databases">
        <title>Complete sequence of Thermotogales bacterium TBF 19.5.1.</title>
        <authorList>
            <consortium name="US DOE Joint Genome Institute"/>
            <person name="Lucas S."/>
            <person name="Copeland A."/>
            <person name="Lapidus A."/>
            <person name="Glavina del Rio T."/>
            <person name="Tice H."/>
            <person name="Bruce D."/>
            <person name="Goodwin L."/>
            <person name="Pitluck S."/>
            <person name="Chertkov O."/>
            <person name="Brettin T."/>
            <person name="Detter J.C."/>
            <person name="Han C."/>
            <person name="Schmutz J."/>
            <person name="Larimer F."/>
            <person name="Land M."/>
            <person name="Hauser L."/>
            <person name="Kyrpides N."/>
            <person name="Ovchinnikova G."/>
            <person name="Noll K."/>
        </authorList>
    </citation>
    <scope>NUCLEOTIDE SEQUENCE [LARGE SCALE GENOMIC DNA]</scope>
    <source>
        <strain>ATCC BAA-1733 / DSM 21960 / TBF 19.5.1</strain>
    </source>
</reference>
<organism>
    <name type="scientific">Kosmotoga olearia (strain ATCC BAA-1733 / DSM 21960 / TBF 19.5.1)</name>
    <dbReference type="NCBI Taxonomy" id="521045"/>
    <lineage>
        <taxon>Bacteria</taxon>
        <taxon>Thermotogati</taxon>
        <taxon>Thermotogota</taxon>
        <taxon>Thermotogae</taxon>
        <taxon>Kosmotogales</taxon>
        <taxon>Kosmotogaceae</taxon>
        <taxon>Kosmotoga</taxon>
    </lineage>
</organism>
<accession>C5CI63</accession>
<name>ADEC_KOSOT</name>
<evidence type="ECO:0000255" key="1">
    <source>
        <dbReference type="HAMAP-Rule" id="MF_01518"/>
    </source>
</evidence>
<dbReference type="EC" id="3.5.4.2" evidence="1"/>
<dbReference type="EMBL" id="CP001634">
    <property type="protein sequence ID" value="ACR80765.1"/>
    <property type="molecule type" value="Genomic_DNA"/>
</dbReference>
<dbReference type="RefSeq" id="WP_015869406.1">
    <property type="nucleotide sequence ID" value="NC_012785.1"/>
</dbReference>
<dbReference type="SMR" id="C5CI63"/>
<dbReference type="STRING" id="521045.Kole_2088"/>
<dbReference type="KEGG" id="kol:Kole_2088"/>
<dbReference type="eggNOG" id="COG1001">
    <property type="taxonomic scope" value="Bacteria"/>
</dbReference>
<dbReference type="HOGENOM" id="CLU_027935_0_0_0"/>
<dbReference type="OrthoDB" id="9775607at2"/>
<dbReference type="Proteomes" id="UP000002382">
    <property type="component" value="Chromosome"/>
</dbReference>
<dbReference type="GO" id="GO:0000034">
    <property type="term" value="F:adenine deaminase activity"/>
    <property type="evidence" value="ECO:0007669"/>
    <property type="project" value="UniProtKB-UniRule"/>
</dbReference>
<dbReference type="GO" id="GO:0006146">
    <property type="term" value="P:adenine catabolic process"/>
    <property type="evidence" value="ECO:0007669"/>
    <property type="project" value="InterPro"/>
</dbReference>
<dbReference type="CDD" id="cd01295">
    <property type="entry name" value="AdeC"/>
    <property type="match status" value="1"/>
</dbReference>
<dbReference type="FunFam" id="3.20.20.140:FF:000016">
    <property type="entry name" value="Adenine deaminase"/>
    <property type="match status" value="1"/>
</dbReference>
<dbReference type="Gene3D" id="3.20.20.140">
    <property type="entry name" value="Metal-dependent hydrolases"/>
    <property type="match status" value="1"/>
</dbReference>
<dbReference type="Gene3D" id="2.30.40.10">
    <property type="entry name" value="Urease, subunit C, domain 1"/>
    <property type="match status" value="1"/>
</dbReference>
<dbReference type="HAMAP" id="MF_01518">
    <property type="entry name" value="Adenine_deamin"/>
    <property type="match status" value="1"/>
</dbReference>
<dbReference type="InterPro" id="IPR006679">
    <property type="entry name" value="Adenine_deam"/>
</dbReference>
<dbReference type="InterPro" id="IPR026912">
    <property type="entry name" value="Adenine_deam_C"/>
</dbReference>
<dbReference type="InterPro" id="IPR006680">
    <property type="entry name" value="Amidohydro-rel"/>
</dbReference>
<dbReference type="InterPro" id="IPR011059">
    <property type="entry name" value="Metal-dep_hydrolase_composite"/>
</dbReference>
<dbReference type="InterPro" id="IPR032466">
    <property type="entry name" value="Metal_Hydrolase"/>
</dbReference>
<dbReference type="NCBIfam" id="TIGR01178">
    <property type="entry name" value="ade"/>
    <property type="match status" value="1"/>
</dbReference>
<dbReference type="PANTHER" id="PTHR11113:SF2">
    <property type="entry name" value="ADENINE DEAMINASE"/>
    <property type="match status" value="1"/>
</dbReference>
<dbReference type="PANTHER" id="PTHR11113">
    <property type="entry name" value="N-ACETYLGLUCOSAMINE-6-PHOSPHATE DEACETYLASE"/>
    <property type="match status" value="1"/>
</dbReference>
<dbReference type="Pfam" id="PF13382">
    <property type="entry name" value="Adenine_deam_C"/>
    <property type="match status" value="1"/>
</dbReference>
<dbReference type="Pfam" id="PF01979">
    <property type="entry name" value="Amidohydro_1"/>
    <property type="match status" value="1"/>
</dbReference>
<dbReference type="SUPFAM" id="SSF51338">
    <property type="entry name" value="Composite domain of metallo-dependent hydrolases"/>
    <property type="match status" value="1"/>
</dbReference>
<dbReference type="SUPFAM" id="SSF51556">
    <property type="entry name" value="Metallo-dependent hydrolases"/>
    <property type="match status" value="1"/>
</dbReference>
<proteinExistence type="inferred from homology"/>
<protein>
    <recommendedName>
        <fullName evidence="1">Adenine deaminase</fullName>
        <shortName evidence="1">Adenase</shortName>
        <shortName evidence="1">Adenine aminase</shortName>
        <ecNumber evidence="1">3.5.4.2</ecNumber>
    </recommendedName>
</protein>
<sequence>MNIIDIIPVARGKQPADLLLKNARIVNVFSGEIERANIAIFRKRIAGIGDYSEGKQVIDLHGAYVVPGLIDAHLHIESSMVSPVEFAKTVLPRGTTTVIADPHEIANVLGLDGVEYLIKSTEGVPLNLYIMLPSSVPATNLENNGARISVMDMIGFVEKHPRVLGLGEVMNYPDIINGDHDSIAKIELLRHKYKKIDGHIPGISGKDLNAYICAFIRSDHECTNVEEAKEKLARGMQILVREGSVARNLDELLPLINEKNYPFISFCTDDKHPNDILNEGHIDYMIRYAIKKGIDPITAVRAATINTARHYNLRSMGAIAPGYKADFVIVDNLEEFRISMVFKDSKLIAENGKLVIDINREQFPLEEVNTFKCPHIEEKDLEVLNKGENIRVIRVYGDDVLTKELRMEPKTKDGRIVSDVNRDILKVASICRYCEEKSMAIGFINGTGLKQGAVATSVGHDAHNMSVIGTNDADMVVAANRVIDMGGGLVIANSGKVLAELPLPIAGLMSNLSSKEVAERLGHLKTVLKELGCEVPDLFMTLSFVQLSVIPELRITNQGLVDVINNNFVSLFIGKEG</sequence>